<organism>
    <name type="scientific">Pectobacterium atrosepticum (strain SCRI 1043 / ATCC BAA-672)</name>
    <name type="common">Erwinia carotovora subsp. atroseptica</name>
    <dbReference type="NCBI Taxonomy" id="218491"/>
    <lineage>
        <taxon>Bacteria</taxon>
        <taxon>Pseudomonadati</taxon>
        <taxon>Pseudomonadota</taxon>
        <taxon>Gammaproteobacteria</taxon>
        <taxon>Enterobacterales</taxon>
        <taxon>Pectobacteriaceae</taxon>
        <taxon>Pectobacterium</taxon>
    </lineage>
</organism>
<accession>Q6CZZ1</accession>
<proteinExistence type="inferred from homology"/>
<sequence length="38" mass="4349">MKVRASVKKLCRNCKIVKRNGVVRVICSAEPKHKQRQG</sequence>
<comment type="similarity">
    <text evidence="1">Belongs to the bacterial ribosomal protein bL36 family.</text>
</comment>
<feature type="chain" id="PRO_0000126187" description="Large ribosomal subunit protein bL36A">
    <location>
        <begin position="1"/>
        <end position="38"/>
    </location>
</feature>
<evidence type="ECO:0000255" key="1">
    <source>
        <dbReference type="HAMAP-Rule" id="MF_00251"/>
    </source>
</evidence>
<evidence type="ECO:0000305" key="2"/>
<name>RL361_PECAS</name>
<keyword id="KW-1185">Reference proteome</keyword>
<keyword id="KW-0687">Ribonucleoprotein</keyword>
<keyword id="KW-0689">Ribosomal protein</keyword>
<dbReference type="EMBL" id="BX950851">
    <property type="protein sequence ID" value="CAG76907.1"/>
    <property type="molecule type" value="Genomic_DNA"/>
</dbReference>
<dbReference type="RefSeq" id="WP_002227352.1">
    <property type="nucleotide sequence ID" value="NC_004547.2"/>
</dbReference>
<dbReference type="SMR" id="Q6CZZ1"/>
<dbReference type="STRING" id="218491.ECA4010"/>
<dbReference type="GeneID" id="98190585"/>
<dbReference type="KEGG" id="eca:ECA4010"/>
<dbReference type="eggNOG" id="COG0257">
    <property type="taxonomic scope" value="Bacteria"/>
</dbReference>
<dbReference type="HOGENOM" id="CLU_135723_6_2_6"/>
<dbReference type="OrthoDB" id="9802520at2"/>
<dbReference type="Proteomes" id="UP000007966">
    <property type="component" value="Chromosome"/>
</dbReference>
<dbReference type="GO" id="GO:0005737">
    <property type="term" value="C:cytoplasm"/>
    <property type="evidence" value="ECO:0007669"/>
    <property type="project" value="UniProtKB-ARBA"/>
</dbReference>
<dbReference type="GO" id="GO:1990904">
    <property type="term" value="C:ribonucleoprotein complex"/>
    <property type="evidence" value="ECO:0007669"/>
    <property type="project" value="UniProtKB-KW"/>
</dbReference>
<dbReference type="GO" id="GO:0005840">
    <property type="term" value="C:ribosome"/>
    <property type="evidence" value="ECO:0007669"/>
    <property type="project" value="UniProtKB-KW"/>
</dbReference>
<dbReference type="GO" id="GO:0003735">
    <property type="term" value="F:structural constituent of ribosome"/>
    <property type="evidence" value="ECO:0007669"/>
    <property type="project" value="InterPro"/>
</dbReference>
<dbReference type="GO" id="GO:0006412">
    <property type="term" value="P:translation"/>
    <property type="evidence" value="ECO:0007669"/>
    <property type="project" value="UniProtKB-UniRule"/>
</dbReference>
<dbReference type="HAMAP" id="MF_00251">
    <property type="entry name" value="Ribosomal_bL36"/>
    <property type="match status" value="1"/>
</dbReference>
<dbReference type="InterPro" id="IPR000473">
    <property type="entry name" value="Ribosomal_bL36"/>
</dbReference>
<dbReference type="InterPro" id="IPR035977">
    <property type="entry name" value="Ribosomal_bL36_sp"/>
</dbReference>
<dbReference type="NCBIfam" id="TIGR01022">
    <property type="entry name" value="rpmJ_bact"/>
    <property type="match status" value="1"/>
</dbReference>
<dbReference type="PANTHER" id="PTHR42888">
    <property type="entry name" value="50S RIBOSOMAL PROTEIN L36, CHLOROPLASTIC"/>
    <property type="match status" value="1"/>
</dbReference>
<dbReference type="PANTHER" id="PTHR42888:SF1">
    <property type="entry name" value="LARGE RIBOSOMAL SUBUNIT PROTEIN BL36C"/>
    <property type="match status" value="1"/>
</dbReference>
<dbReference type="Pfam" id="PF00444">
    <property type="entry name" value="Ribosomal_L36"/>
    <property type="match status" value="1"/>
</dbReference>
<dbReference type="SUPFAM" id="SSF57840">
    <property type="entry name" value="Ribosomal protein L36"/>
    <property type="match status" value="1"/>
</dbReference>
<dbReference type="PROSITE" id="PS00828">
    <property type="entry name" value="RIBOSOMAL_L36"/>
    <property type="match status" value="1"/>
</dbReference>
<reference key="1">
    <citation type="journal article" date="2004" name="Proc. Natl. Acad. Sci. U.S.A.">
        <title>Genome sequence of the enterobacterial phytopathogen Erwinia carotovora subsp. atroseptica and characterization of virulence factors.</title>
        <authorList>
            <person name="Bell K.S."/>
            <person name="Sebaihia M."/>
            <person name="Pritchard L."/>
            <person name="Holden M.T.G."/>
            <person name="Hyman L.J."/>
            <person name="Holeva M.C."/>
            <person name="Thomson N.R."/>
            <person name="Bentley S.D."/>
            <person name="Churcher L.J.C."/>
            <person name="Mungall K."/>
            <person name="Atkin R."/>
            <person name="Bason N."/>
            <person name="Brooks K."/>
            <person name="Chillingworth T."/>
            <person name="Clark K."/>
            <person name="Doggett J."/>
            <person name="Fraser A."/>
            <person name="Hance Z."/>
            <person name="Hauser H."/>
            <person name="Jagels K."/>
            <person name="Moule S."/>
            <person name="Norbertczak H."/>
            <person name="Ormond D."/>
            <person name="Price C."/>
            <person name="Quail M.A."/>
            <person name="Sanders M."/>
            <person name="Walker D."/>
            <person name="Whitehead S."/>
            <person name="Salmond G.P.C."/>
            <person name="Birch P.R.J."/>
            <person name="Parkhill J."/>
            <person name="Toth I.K."/>
        </authorList>
    </citation>
    <scope>NUCLEOTIDE SEQUENCE [LARGE SCALE GENOMIC DNA]</scope>
    <source>
        <strain>SCRI 1043 / ATCC BAA-672</strain>
    </source>
</reference>
<protein>
    <recommendedName>
        <fullName evidence="1">Large ribosomal subunit protein bL36A</fullName>
    </recommendedName>
    <alternativeName>
        <fullName evidence="2">50S ribosomal protein L36 1</fullName>
    </alternativeName>
</protein>
<gene>
    <name evidence="1" type="primary">rpmJ1</name>
    <name type="synonym">rpmJ</name>
    <name type="ordered locus">ECA4010</name>
</gene>